<sequence>MCGIVGIVGTQPVAERLVDALKRLEYRGYDSAGVATIDNGAMDRRRAEGKLFNLEKLVSEKPLPGVVGIAHTRWATHGVPNEINAHPHFVDGVAVVHNGIIENFSELREELSAEGATFTTQTDTEVVAQLLAKYTREGLGHREAMLKMLNHVTGAYALVVMFQDDPGTLLSARSGPPLAVGYGRGEMFLGSDAIALSPFTNEITYLVDGDCAIVTRDGAEIIDFSGKPVKRERQISQATAFVVDKGNHRHFMEKEIYEQPEVISHALSHYVDFATRTVKDADKAIDFASLSGLAISACGTAYLSGLIGKYWFERYARLPVEIDVASEFRYREIPLVPTQAALFISQSGETADTLAALRYCQQEGLKIGAVVNTRESTMARESDAIFPILAGPEIGVASTKAFTCQLAVLASLAVAAGKARGTLKPGEEKQLVQQLIEMPRIMSKVLNVIQPQIEALSRDLSRFKDVLYLGRGTSFPLALEGALKLKEISYIHAEGYAAGELKHGPIALIDENMPVIVIAPHDRFFEKTVSNMQEVAARGGRIIFITDEKGAAASKLETMATITLPNVDELIAPMVFSLPIQLLAYHTAVFMGTDVDQPRNLAKSVTVE</sequence>
<reference key="1">
    <citation type="journal article" date="2001" name="Science">
        <title>The genome of the natural genetic engineer Agrobacterium tumefaciens C58.</title>
        <authorList>
            <person name="Wood D.W."/>
            <person name="Setubal J.C."/>
            <person name="Kaul R."/>
            <person name="Monks D.E."/>
            <person name="Kitajima J.P."/>
            <person name="Okura V.K."/>
            <person name="Zhou Y."/>
            <person name="Chen L."/>
            <person name="Wood G.E."/>
            <person name="Almeida N.F. Jr."/>
            <person name="Woo L."/>
            <person name="Chen Y."/>
            <person name="Paulsen I.T."/>
            <person name="Eisen J.A."/>
            <person name="Karp P.D."/>
            <person name="Bovee D. Sr."/>
            <person name="Chapman P."/>
            <person name="Clendenning J."/>
            <person name="Deatherage G."/>
            <person name="Gillet W."/>
            <person name="Grant C."/>
            <person name="Kutyavin T."/>
            <person name="Levy R."/>
            <person name="Li M.-J."/>
            <person name="McClelland E."/>
            <person name="Palmieri A."/>
            <person name="Raymond C."/>
            <person name="Rouse G."/>
            <person name="Saenphimmachak C."/>
            <person name="Wu Z."/>
            <person name="Romero P."/>
            <person name="Gordon D."/>
            <person name="Zhang S."/>
            <person name="Yoo H."/>
            <person name="Tao Y."/>
            <person name="Biddle P."/>
            <person name="Jung M."/>
            <person name="Krespan W."/>
            <person name="Perry M."/>
            <person name="Gordon-Kamm B."/>
            <person name="Liao L."/>
            <person name="Kim S."/>
            <person name="Hendrick C."/>
            <person name="Zhao Z.-Y."/>
            <person name="Dolan M."/>
            <person name="Chumley F."/>
            <person name="Tingey S.V."/>
            <person name="Tomb J.-F."/>
            <person name="Gordon M.P."/>
            <person name="Olson M.V."/>
            <person name="Nester E.W."/>
        </authorList>
    </citation>
    <scope>NUCLEOTIDE SEQUENCE [LARGE SCALE GENOMIC DNA]</scope>
    <source>
        <strain>C58 / ATCC 33970</strain>
    </source>
</reference>
<reference key="2">
    <citation type="journal article" date="2001" name="Science">
        <title>Genome sequence of the plant pathogen and biotechnology agent Agrobacterium tumefaciens C58.</title>
        <authorList>
            <person name="Goodner B."/>
            <person name="Hinkle G."/>
            <person name="Gattung S."/>
            <person name="Miller N."/>
            <person name="Blanchard M."/>
            <person name="Qurollo B."/>
            <person name="Goldman B.S."/>
            <person name="Cao Y."/>
            <person name="Askenazi M."/>
            <person name="Halling C."/>
            <person name="Mullin L."/>
            <person name="Houmiel K."/>
            <person name="Gordon J."/>
            <person name="Vaudin M."/>
            <person name="Iartchouk O."/>
            <person name="Epp A."/>
            <person name="Liu F."/>
            <person name="Wollam C."/>
            <person name="Allinger M."/>
            <person name="Doughty D."/>
            <person name="Scott C."/>
            <person name="Lappas C."/>
            <person name="Markelz B."/>
            <person name="Flanagan C."/>
            <person name="Crowell C."/>
            <person name="Gurson J."/>
            <person name="Lomo C."/>
            <person name="Sear C."/>
            <person name="Strub G."/>
            <person name="Cielo C."/>
            <person name="Slater S."/>
        </authorList>
    </citation>
    <scope>NUCLEOTIDE SEQUENCE [LARGE SCALE GENOMIC DNA]</scope>
    <source>
        <strain>C58 / ATCC 33970</strain>
    </source>
</reference>
<comment type="function">
    <text evidence="1">Catalyzes the first step in hexosamine metabolism, converting fructose-6P into glucosamine-6P using glutamine as a nitrogen source.</text>
</comment>
<comment type="catalytic activity">
    <reaction evidence="1">
        <text>D-fructose 6-phosphate + L-glutamine = D-glucosamine 6-phosphate + L-glutamate</text>
        <dbReference type="Rhea" id="RHEA:13237"/>
        <dbReference type="ChEBI" id="CHEBI:29985"/>
        <dbReference type="ChEBI" id="CHEBI:58359"/>
        <dbReference type="ChEBI" id="CHEBI:58725"/>
        <dbReference type="ChEBI" id="CHEBI:61527"/>
        <dbReference type="EC" id="2.6.1.16"/>
    </reaction>
</comment>
<comment type="subunit">
    <text evidence="1">Homodimer.</text>
</comment>
<comment type="subcellular location">
    <subcellularLocation>
        <location evidence="1">Cytoplasm</location>
    </subcellularLocation>
</comment>
<gene>
    <name evidence="1" type="primary">glmS</name>
    <name type="ordered locus">Atu1786</name>
    <name type="ORF">AGR_C_3284</name>
</gene>
<feature type="initiator methionine" description="Removed" evidence="1">
    <location>
        <position position="1"/>
    </location>
</feature>
<feature type="chain" id="PRO_0000135291" description="Glutamine--fructose-6-phosphate aminotransferase [isomerizing]">
    <location>
        <begin position="2"/>
        <end position="608"/>
    </location>
</feature>
<feature type="domain" description="Glutamine amidotransferase type-2" evidence="1">
    <location>
        <begin position="2"/>
        <end position="217"/>
    </location>
</feature>
<feature type="domain" description="SIS 1" evidence="1">
    <location>
        <begin position="281"/>
        <end position="422"/>
    </location>
</feature>
<feature type="domain" description="SIS 2" evidence="1">
    <location>
        <begin position="456"/>
        <end position="598"/>
    </location>
</feature>
<feature type="active site" description="Nucleophile; for GATase activity" evidence="1">
    <location>
        <position position="2"/>
    </location>
</feature>
<feature type="active site" description="For Fru-6P isomerization activity" evidence="1">
    <location>
        <position position="603"/>
    </location>
</feature>
<evidence type="ECO:0000255" key="1">
    <source>
        <dbReference type="HAMAP-Rule" id="MF_00164"/>
    </source>
</evidence>
<dbReference type="EC" id="2.6.1.16" evidence="1"/>
<dbReference type="EMBL" id="AE007869">
    <property type="protein sequence ID" value="AAK87556.1"/>
    <property type="molecule type" value="Genomic_DNA"/>
</dbReference>
<dbReference type="PIR" id="AC2796">
    <property type="entry name" value="AC2796"/>
</dbReference>
<dbReference type="PIR" id="C97575">
    <property type="entry name" value="C97575"/>
</dbReference>
<dbReference type="RefSeq" id="NP_354771.1">
    <property type="nucleotide sequence ID" value="NC_003062.2"/>
</dbReference>
<dbReference type="RefSeq" id="WP_010971865.1">
    <property type="nucleotide sequence ID" value="NC_003062.2"/>
</dbReference>
<dbReference type="SMR" id="Q8UEH1"/>
<dbReference type="STRING" id="176299.Atu1786"/>
<dbReference type="EnsemblBacteria" id="AAK87556">
    <property type="protein sequence ID" value="AAK87556"/>
    <property type="gene ID" value="Atu1786"/>
</dbReference>
<dbReference type="GeneID" id="1133824"/>
<dbReference type="KEGG" id="atu:Atu1786"/>
<dbReference type="PATRIC" id="fig|176299.10.peg.1801"/>
<dbReference type="eggNOG" id="COG0449">
    <property type="taxonomic scope" value="Bacteria"/>
</dbReference>
<dbReference type="HOGENOM" id="CLU_012520_5_2_5"/>
<dbReference type="OrthoDB" id="9761808at2"/>
<dbReference type="PhylomeDB" id="Q8UEH1"/>
<dbReference type="BioCyc" id="AGRO:ATU1786-MONOMER"/>
<dbReference type="Proteomes" id="UP000000813">
    <property type="component" value="Chromosome circular"/>
</dbReference>
<dbReference type="GO" id="GO:0005829">
    <property type="term" value="C:cytosol"/>
    <property type="evidence" value="ECO:0007669"/>
    <property type="project" value="TreeGrafter"/>
</dbReference>
<dbReference type="GO" id="GO:0097367">
    <property type="term" value="F:carbohydrate derivative binding"/>
    <property type="evidence" value="ECO:0007669"/>
    <property type="project" value="InterPro"/>
</dbReference>
<dbReference type="GO" id="GO:0004360">
    <property type="term" value="F:glutamine-fructose-6-phosphate transaminase (isomerizing) activity"/>
    <property type="evidence" value="ECO:0007669"/>
    <property type="project" value="UniProtKB-UniRule"/>
</dbReference>
<dbReference type="GO" id="GO:0005975">
    <property type="term" value="P:carbohydrate metabolic process"/>
    <property type="evidence" value="ECO:0007669"/>
    <property type="project" value="UniProtKB-UniRule"/>
</dbReference>
<dbReference type="GO" id="GO:0006002">
    <property type="term" value="P:fructose 6-phosphate metabolic process"/>
    <property type="evidence" value="ECO:0007669"/>
    <property type="project" value="TreeGrafter"/>
</dbReference>
<dbReference type="GO" id="GO:0006487">
    <property type="term" value="P:protein N-linked glycosylation"/>
    <property type="evidence" value="ECO:0007669"/>
    <property type="project" value="TreeGrafter"/>
</dbReference>
<dbReference type="GO" id="GO:0006047">
    <property type="term" value="P:UDP-N-acetylglucosamine metabolic process"/>
    <property type="evidence" value="ECO:0007669"/>
    <property type="project" value="TreeGrafter"/>
</dbReference>
<dbReference type="CDD" id="cd00714">
    <property type="entry name" value="GFAT"/>
    <property type="match status" value="1"/>
</dbReference>
<dbReference type="CDD" id="cd05008">
    <property type="entry name" value="SIS_GlmS_GlmD_1"/>
    <property type="match status" value="1"/>
</dbReference>
<dbReference type="CDD" id="cd05009">
    <property type="entry name" value="SIS_GlmS_GlmD_2"/>
    <property type="match status" value="1"/>
</dbReference>
<dbReference type="FunFam" id="3.40.50.10490:FF:000001">
    <property type="entry name" value="Glutamine--fructose-6-phosphate aminotransferase [isomerizing]"/>
    <property type="match status" value="1"/>
</dbReference>
<dbReference type="FunFam" id="3.60.20.10:FF:000006">
    <property type="entry name" value="Glutamine--fructose-6-phosphate aminotransferase [isomerizing]"/>
    <property type="match status" value="1"/>
</dbReference>
<dbReference type="Gene3D" id="3.40.50.10490">
    <property type="entry name" value="Glucose-6-phosphate isomerase like protein, domain 1"/>
    <property type="match status" value="2"/>
</dbReference>
<dbReference type="Gene3D" id="3.60.20.10">
    <property type="entry name" value="Glutamine Phosphoribosylpyrophosphate, subunit 1, domain 1"/>
    <property type="match status" value="1"/>
</dbReference>
<dbReference type="HAMAP" id="MF_00164">
    <property type="entry name" value="GlmS"/>
    <property type="match status" value="1"/>
</dbReference>
<dbReference type="InterPro" id="IPR017932">
    <property type="entry name" value="GATase_2_dom"/>
</dbReference>
<dbReference type="InterPro" id="IPR005855">
    <property type="entry name" value="GFAT"/>
</dbReference>
<dbReference type="InterPro" id="IPR047084">
    <property type="entry name" value="GFAT_N"/>
</dbReference>
<dbReference type="InterPro" id="IPR035466">
    <property type="entry name" value="GlmS/AgaS_SIS"/>
</dbReference>
<dbReference type="InterPro" id="IPR035490">
    <property type="entry name" value="GlmS/FrlB_SIS"/>
</dbReference>
<dbReference type="InterPro" id="IPR029055">
    <property type="entry name" value="Ntn_hydrolases_N"/>
</dbReference>
<dbReference type="InterPro" id="IPR001347">
    <property type="entry name" value="SIS_dom"/>
</dbReference>
<dbReference type="InterPro" id="IPR046348">
    <property type="entry name" value="SIS_dom_sf"/>
</dbReference>
<dbReference type="NCBIfam" id="TIGR01135">
    <property type="entry name" value="glmS"/>
    <property type="match status" value="1"/>
</dbReference>
<dbReference type="NCBIfam" id="NF001484">
    <property type="entry name" value="PRK00331.1"/>
    <property type="match status" value="1"/>
</dbReference>
<dbReference type="PANTHER" id="PTHR10937">
    <property type="entry name" value="GLUCOSAMINE--FRUCTOSE-6-PHOSPHATE AMINOTRANSFERASE, ISOMERIZING"/>
    <property type="match status" value="1"/>
</dbReference>
<dbReference type="PANTHER" id="PTHR10937:SF0">
    <property type="entry name" value="GLUTAMINE--FRUCTOSE-6-PHOSPHATE TRANSAMINASE (ISOMERIZING)"/>
    <property type="match status" value="1"/>
</dbReference>
<dbReference type="Pfam" id="PF13522">
    <property type="entry name" value="GATase_6"/>
    <property type="match status" value="1"/>
</dbReference>
<dbReference type="Pfam" id="PF01380">
    <property type="entry name" value="SIS"/>
    <property type="match status" value="2"/>
</dbReference>
<dbReference type="SUPFAM" id="SSF56235">
    <property type="entry name" value="N-terminal nucleophile aminohydrolases (Ntn hydrolases)"/>
    <property type="match status" value="1"/>
</dbReference>
<dbReference type="SUPFAM" id="SSF53697">
    <property type="entry name" value="SIS domain"/>
    <property type="match status" value="1"/>
</dbReference>
<dbReference type="PROSITE" id="PS51278">
    <property type="entry name" value="GATASE_TYPE_2"/>
    <property type="match status" value="1"/>
</dbReference>
<dbReference type="PROSITE" id="PS51464">
    <property type="entry name" value="SIS"/>
    <property type="match status" value="2"/>
</dbReference>
<accession>Q8UEH1</accession>
<keyword id="KW-0032">Aminotransferase</keyword>
<keyword id="KW-0963">Cytoplasm</keyword>
<keyword id="KW-0315">Glutamine amidotransferase</keyword>
<keyword id="KW-1185">Reference proteome</keyword>
<keyword id="KW-0677">Repeat</keyword>
<keyword id="KW-0808">Transferase</keyword>
<protein>
    <recommendedName>
        <fullName evidence="1">Glutamine--fructose-6-phosphate aminotransferase [isomerizing]</fullName>
        <ecNumber evidence="1">2.6.1.16</ecNumber>
    </recommendedName>
    <alternativeName>
        <fullName evidence="1">D-fructose-6-phosphate amidotransferase</fullName>
    </alternativeName>
    <alternativeName>
        <fullName evidence="1">GFAT</fullName>
    </alternativeName>
    <alternativeName>
        <fullName evidence="1">Glucosamine-6-phosphate synthase</fullName>
    </alternativeName>
    <alternativeName>
        <fullName evidence="1">Hexosephosphate aminotransferase</fullName>
    </alternativeName>
    <alternativeName>
        <fullName evidence="1">L-glutamine--D-fructose-6-phosphate amidotransferase</fullName>
    </alternativeName>
</protein>
<proteinExistence type="inferred from homology"/>
<organism>
    <name type="scientific">Agrobacterium fabrum (strain C58 / ATCC 33970)</name>
    <name type="common">Agrobacterium tumefaciens (strain C58)</name>
    <dbReference type="NCBI Taxonomy" id="176299"/>
    <lineage>
        <taxon>Bacteria</taxon>
        <taxon>Pseudomonadati</taxon>
        <taxon>Pseudomonadota</taxon>
        <taxon>Alphaproteobacteria</taxon>
        <taxon>Hyphomicrobiales</taxon>
        <taxon>Rhizobiaceae</taxon>
        <taxon>Rhizobium/Agrobacterium group</taxon>
        <taxon>Agrobacterium</taxon>
        <taxon>Agrobacterium tumefaciens complex</taxon>
    </lineage>
</organism>
<name>GLMS_AGRFC</name>